<keyword id="KW-0025">Alternative splicing</keyword>
<keyword id="KW-0156">Chromatin regulator</keyword>
<keyword id="KW-0158">Chromosome</keyword>
<keyword id="KW-0489">Methyltransferase</keyword>
<keyword id="KW-0539">Nucleus</keyword>
<keyword id="KW-1185">Reference proteome</keyword>
<keyword id="KW-0949">S-adenosyl-L-methionine</keyword>
<keyword id="KW-0808">Transferase</keyword>
<protein>
    <recommendedName>
        <fullName>Histone-lysine N-methyltransferase PRDM7</fullName>
        <ecNumber evidence="5">2.1.1.-</ecNumber>
    </recommendedName>
    <alternativeName>
        <fullName>PR domain zinc finger protein 7</fullName>
    </alternativeName>
    <alternativeName>
        <fullName>PR domain-containing protein 7</fullName>
    </alternativeName>
    <alternativeName>
        <fullName>[histone H3]-lysine4 N-methyltransferase PRDM7</fullName>
    </alternativeName>
</protein>
<accession>Q9NQW5</accession>
<accession>A4Q9G8</accession>
<accession>Q08EM4</accession>
<accession>Q9NQW4</accession>
<name>PRDM7_HUMAN</name>
<sequence length="492" mass="55777">MSPERSQEESPEGDTERTERKPMVKDAFKDISIYFTKEEWAEMGDWEKTRYRNVKMNYNALITVGLRATRPAFMCHRRQAIKLQVDDTEDSDEEWTPRQQVKPPWMAFRGEQSKHQKGMPKASFNNESSLRELSGTPNLLNTSDSEQAQKPVSPPGEASTSGQHSRLKLELRRKETEGKMYSLRERKGHAYKEISEPQDDDYLYCEMCQNFFIDSCAAHGPPTFVKDSAVDKGHPNRSALSLPPGLRIGPSGIPQAGLGVWNEASDLPLGLHFGPYEGRITEDEEAANSGYSWLITKGRNCYEYVDGKDKSSANWMRYVNCARDDEEQNLVAFQYHRQIFYRTCRVIRPGCELLVWSGDEYGQELGIRSSIEPAESLGQAVNCWSGMGMSMARNWASSGAASGRKSSWQGENQSQRSIHVPHAVWPFQVKNFSVNMWNAITPLRTSQDHLQENFSNQRIPAQGIRIRSGNILIHAAVMTKPKVKRSKKGPNS</sequence>
<gene>
    <name evidence="8 10" type="primary">PRDM7</name>
    <name type="synonym">PFM4</name>
</gene>
<organism>
    <name type="scientific">Homo sapiens</name>
    <name type="common">Human</name>
    <dbReference type="NCBI Taxonomy" id="9606"/>
    <lineage>
        <taxon>Eukaryota</taxon>
        <taxon>Metazoa</taxon>
        <taxon>Chordata</taxon>
        <taxon>Craniata</taxon>
        <taxon>Vertebrata</taxon>
        <taxon>Euteleostomi</taxon>
        <taxon>Mammalia</taxon>
        <taxon>Eutheria</taxon>
        <taxon>Euarchontoglires</taxon>
        <taxon>Primates</taxon>
        <taxon>Haplorrhini</taxon>
        <taxon>Catarrhini</taxon>
        <taxon>Hominidae</taxon>
        <taxon>Homo</taxon>
    </lineage>
</organism>
<dbReference type="EC" id="2.1.1.-" evidence="5"/>
<dbReference type="EMBL" id="AM690991">
    <property type="protein sequence ID" value="CAM84449.1"/>
    <property type="molecule type" value="mRNA"/>
</dbReference>
<dbReference type="EMBL" id="AF274347">
    <property type="protein sequence ID" value="AAF78084.1"/>
    <property type="molecule type" value="mRNA"/>
</dbReference>
<dbReference type="EMBL" id="AF274348">
    <property type="protein sequence ID" value="AAF78085.1"/>
    <property type="molecule type" value="mRNA"/>
</dbReference>
<dbReference type="EMBL" id="CH471184">
    <property type="protein sequence ID" value="EAW66654.1"/>
    <property type="molecule type" value="Genomic_DNA"/>
</dbReference>
<dbReference type="EMBL" id="BC107033">
    <property type="protein sequence ID" value="AAI07034.1"/>
    <property type="molecule type" value="mRNA"/>
</dbReference>
<dbReference type="CCDS" id="CCDS45557.1">
    <molecule id="Q9NQW5-3"/>
</dbReference>
<dbReference type="RefSeq" id="NP_001091643.1">
    <molecule id="Q9NQW5-3"/>
    <property type="nucleotide sequence ID" value="NM_001098173.2"/>
</dbReference>
<dbReference type="RefSeq" id="XP_005256331.1">
    <property type="nucleotide sequence ID" value="XM_005256274.3"/>
</dbReference>
<dbReference type="SMR" id="Q9NQW5"/>
<dbReference type="BioGRID" id="116286">
    <property type="interactions" value="14"/>
</dbReference>
<dbReference type="FunCoup" id="Q9NQW5">
    <property type="interactions" value="73"/>
</dbReference>
<dbReference type="IntAct" id="Q9NQW5">
    <property type="interactions" value="10"/>
</dbReference>
<dbReference type="MINT" id="Q9NQW5"/>
<dbReference type="STRING" id="9606.ENSP00000496449"/>
<dbReference type="ChEMBL" id="CHEMBL5214861"/>
<dbReference type="iPTMnet" id="Q9NQW5"/>
<dbReference type="PhosphoSitePlus" id="Q9NQW5"/>
<dbReference type="BioMuta" id="PRDM7"/>
<dbReference type="DMDM" id="223590134"/>
<dbReference type="jPOST" id="Q9NQW5"/>
<dbReference type="MassIVE" id="Q9NQW5"/>
<dbReference type="PaxDb" id="9606-ENSP00000396732"/>
<dbReference type="PeptideAtlas" id="Q9NQW5"/>
<dbReference type="ProteomicsDB" id="82207">
    <molecule id="Q9NQW5-1"/>
</dbReference>
<dbReference type="ProteomicsDB" id="82208">
    <molecule id="Q9NQW5-2"/>
</dbReference>
<dbReference type="Antibodypedia" id="67566">
    <property type="antibodies" value="63 antibodies from 17 providers"/>
</dbReference>
<dbReference type="DNASU" id="11105"/>
<dbReference type="Ensembl" id="ENST00000449207.8">
    <molecule id="Q9NQW5-3"/>
    <property type="protein sequence ID" value="ENSP00000396732.2"/>
    <property type="gene ID" value="ENSG00000126856.16"/>
</dbReference>
<dbReference type="GeneID" id="11105"/>
<dbReference type="KEGG" id="hsa:11105"/>
<dbReference type="MANE-Select" id="ENST00000449207.8">
    <property type="protein sequence ID" value="ENSP00000396732.2"/>
    <property type="RefSeq nucleotide sequence ID" value="NM_001098173.2"/>
    <property type="RefSeq protein sequence ID" value="NP_001091643.1"/>
</dbReference>
<dbReference type="UCSC" id="uc010cje.4">
    <molecule id="Q9NQW5-3"/>
    <property type="organism name" value="human"/>
</dbReference>
<dbReference type="AGR" id="HGNC:9351"/>
<dbReference type="CTD" id="11105"/>
<dbReference type="DisGeNET" id="11105"/>
<dbReference type="GeneCards" id="PRDM7"/>
<dbReference type="HGNC" id="HGNC:9351">
    <property type="gene designation" value="PRDM7"/>
</dbReference>
<dbReference type="HPA" id="ENSG00000126856">
    <property type="expression patterns" value="Tissue enriched (testis)"/>
</dbReference>
<dbReference type="MIM" id="609759">
    <property type="type" value="gene"/>
</dbReference>
<dbReference type="neXtProt" id="NX_Q9NQW5"/>
<dbReference type="NIAGADS" id="ENSG00000126856"/>
<dbReference type="OpenTargets" id="ENSG00000126856"/>
<dbReference type="PharmGKB" id="PA33719"/>
<dbReference type="VEuPathDB" id="HostDB:ENSG00000126856"/>
<dbReference type="eggNOG" id="KOG2461">
    <property type="taxonomic scope" value="Eukaryota"/>
</dbReference>
<dbReference type="GeneTree" id="ENSGT00940000158211"/>
<dbReference type="HOGENOM" id="CLU_042879_1_0_1"/>
<dbReference type="InParanoid" id="Q9NQW5"/>
<dbReference type="OMA" id="CPIHRVE"/>
<dbReference type="OrthoDB" id="9439903at2759"/>
<dbReference type="PAN-GO" id="Q9NQW5">
    <property type="GO annotations" value="6 GO annotations based on evolutionary models"/>
</dbReference>
<dbReference type="PhylomeDB" id="Q9NQW5"/>
<dbReference type="TreeFam" id="TF337915"/>
<dbReference type="BioCyc" id="MetaCyc:HS13221-MONOMER"/>
<dbReference type="BRENDA" id="2.1.1.354">
    <property type="organism ID" value="2681"/>
</dbReference>
<dbReference type="PathwayCommons" id="Q9NQW5"/>
<dbReference type="Reactome" id="R-HSA-212436">
    <property type="pathway name" value="Generic Transcription Pathway"/>
</dbReference>
<dbReference type="SignaLink" id="Q9NQW5"/>
<dbReference type="BioGRID-ORCS" id="11105">
    <property type="hits" value="14 hits in 1107 CRISPR screens"/>
</dbReference>
<dbReference type="GenomeRNAi" id="11105"/>
<dbReference type="Pharos" id="Q9NQW5">
    <property type="development level" value="Tdark"/>
</dbReference>
<dbReference type="PRO" id="PR:Q9NQW5"/>
<dbReference type="Proteomes" id="UP000005640">
    <property type="component" value="Chromosome 16"/>
</dbReference>
<dbReference type="RNAct" id="Q9NQW5">
    <property type="molecule type" value="protein"/>
</dbReference>
<dbReference type="Bgee" id="ENSG00000126856">
    <property type="expression patterns" value="Expressed in male germ line stem cell (sensu Vertebrata) in testis and 61 other cell types or tissues"/>
</dbReference>
<dbReference type="ExpressionAtlas" id="Q9NQW5">
    <property type="expression patterns" value="baseline and differential"/>
</dbReference>
<dbReference type="GO" id="GO:0005694">
    <property type="term" value="C:chromosome"/>
    <property type="evidence" value="ECO:0007669"/>
    <property type="project" value="UniProtKB-SubCell"/>
</dbReference>
<dbReference type="GO" id="GO:0005634">
    <property type="term" value="C:nucleus"/>
    <property type="evidence" value="ECO:0007669"/>
    <property type="project" value="UniProtKB-SubCell"/>
</dbReference>
<dbReference type="GO" id="GO:0042800">
    <property type="term" value="F:histone H3K4 methyltransferase activity"/>
    <property type="evidence" value="ECO:0000314"/>
    <property type="project" value="ARUK-UCL"/>
</dbReference>
<dbReference type="GO" id="GO:0032259">
    <property type="term" value="P:methylation"/>
    <property type="evidence" value="ECO:0007669"/>
    <property type="project" value="UniProtKB-KW"/>
</dbReference>
<dbReference type="GO" id="GO:0006355">
    <property type="term" value="P:regulation of DNA-templated transcription"/>
    <property type="evidence" value="ECO:0007669"/>
    <property type="project" value="InterPro"/>
</dbReference>
<dbReference type="CDD" id="cd07765">
    <property type="entry name" value="KRAB_A-box"/>
    <property type="match status" value="1"/>
</dbReference>
<dbReference type="CDD" id="cd19193">
    <property type="entry name" value="PR-SET_PRDM7_9"/>
    <property type="match status" value="1"/>
</dbReference>
<dbReference type="FunFam" id="2.170.270.10:FF:000031">
    <property type="entry name" value="probable histone-lysine N-methyltransferase PRDM7"/>
    <property type="match status" value="1"/>
</dbReference>
<dbReference type="Gene3D" id="6.10.140.140">
    <property type="match status" value="1"/>
</dbReference>
<dbReference type="Gene3D" id="2.170.270.10">
    <property type="entry name" value="SET domain"/>
    <property type="match status" value="1"/>
</dbReference>
<dbReference type="InterPro" id="IPR003655">
    <property type="entry name" value="aKRAB"/>
</dbReference>
<dbReference type="InterPro" id="IPR001909">
    <property type="entry name" value="KRAB"/>
</dbReference>
<dbReference type="InterPro" id="IPR036051">
    <property type="entry name" value="KRAB_dom_sf"/>
</dbReference>
<dbReference type="InterPro" id="IPR044417">
    <property type="entry name" value="PRDM7_9_PR-SET"/>
</dbReference>
<dbReference type="InterPro" id="IPR001214">
    <property type="entry name" value="SET_dom"/>
</dbReference>
<dbReference type="InterPro" id="IPR046341">
    <property type="entry name" value="SET_dom_sf"/>
</dbReference>
<dbReference type="InterPro" id="IPR019041">
    <property type="entry name" value="SSXRD_motif"/>
</dbReference>
<dbReference type="PANTHER" id="PTHR14112:SF1">
    <property type="entry name" value="KRAB-RELATED DOMAIN-CONTAINING PROTEIN"/>
    <property type="match status" value="1"/>
</dbReference>
<dbReference type="PANTHER" id="PTHR14112">
    <property type="entry name" value="SYNOVIAL SARCOMA, X MEMBER"/>
    <property type="match status" value="1"/>
</dbReference>
<dbReference type="Pfam" id="PF01352">
    <property type="entry name" value="KRAB"/>
    <property type="match status" value="1"/>
</dbReference>
<dbReference type="Pfam" id="PF21549">
    <property type="entry name" value="PRDM2_PR"/>
    <property type="match status" value="1"/>
</dbReference>
<dbReference type="Pfam" id="PF09514">
    <property type="entry name" value="SSXRD"/>
    <property type="match status" value="1"/>
</dbReference>
<dbReference type="SMART" id="SM00349">
    <property type="entry name" value="KRAB"/>
    <property type="match status" value="1"/>
</dbReference>
<dbReference type="SUPFAM" id="SSF109640">
    <property type="entry name" value="KRAB domain (Kruppel-associated box)"/>
    <property type="match status" value="1"/>
</dbReference>
<dbReference type="PROSITE" id="PS50806">
    <property type="entry name" value="KRAB_RELATED"/>
    <property type="match status" value="1"/>
</dbReference>
<dbReference type="PROSITE" id="PS50280">
    <property type="entry name" value="SET"/>
    <property type="match status" value="1"/>
</dbReference>
<evidence type="ECO:0000255" key="1">
    <source>
        <dbReference type="PROSITE-ProRule" id="PRU00120"/>
    </source>
</evidence>
<evidence type="ECO:0000255" key="2">
    <source>
        <dbReference type="PROSITE-ProRule" id="PRU00190"/>
    </source>
</evidence>
<evidence type="ECO:0000256" key="3">
    <source>
        <dbReference type="SAM" id="MobiDB-lite"/>
    </source>
</evidence>
<evidence type="ECO:0000269" key="4">
    <source>
    </source>
</evidence>
<evidence type="ECO:0000269" key="5">
    <source>
    </source>
</evidence>
<evidence type="ECO:0000303" key="6">
    <source>
    </source>
</evidence>
<evidence type="ECO:0000303" key="7">
    <source>
    </source>
</evidence>
<evidence type="ECO:0000303" key="8">
    <source>
    </source>
</evidence>
<evidence type="ECO:0000305" key="9"/>
<evidence type="ECO:0000312" key="10">
    <source>
        <dbReference type="HGNC" id="HGNC:9351"/>
    </source>
</evidence>
<reference key="1">
    <citation type="journal article" date="2007" name="BMC Evol. Biol.">
        <title>Family expansion and gene rearrangements contributed to the functional specialization of PRDM genes in vertebrates.</title>
        <authorList>
            <person name="Fumasoni I."/>
            <person name="Meani N."/>
            <person name="Rambaldi D."/>
            <person name="Scafetta G."/>
            <person name="Alcalay M."/>
            <person name="Ciccarelli F.D."/>
        </authorList>
    </citation>
    <scope>NUCLEOTIDE SEQUENCE [MRNA] (ISOFORM 1)</scope>
    <scope>VARIANT GLU-90</scope>
</reference>
<reference key="2">
    <citation type="journal article" date="2000" name="Histol. Histopathol.">
        <title>The yin-yang of PR-domain family genes in tumorigenesis.</title>
        <authorList>
            <person name="Jiang G.L."/>
            <person name="Huang S."/>
        </authorList>
    </citation>
    <scope>NUCLEOTIDE SEQUENCE [MRNA] (ISOFORMS 2 AND 3)</scope>
</reference>
<reference key="3">
    <citation type="submission" date="2005-09" db="EMBL/GenBank/DDBJ databases">
        <authorList>
            <person name="Mural R.J."/>
            <person name="Istrail S."/>
            <person name="Sutton G.G."/>
            <person name="Florea L."/>
            <person name="Halpern A.L."/>
            <person name="Mobarry C.M."/>
            <person name="Lippert R."/>
            <person name="Walenz B."/>
            <person name="Shatkay H."/>
            <person name="Dew I."/>
            <person name="Miller J.R."/>
            <person name="Flanigan M.J."/>
            <person name="Edwards N.J."/>
            <person name="Bolanos R."/>
            <person name="Fasulo D."/>
            <person name="Halldorsson B.V."/>
            <person name="Hannenhalli S."/>
            <person name="Turner R."/>
            <person name="Yooseph S."/>
            <person name="Lu F."/>
            <person name="Nusskern D.R."/>
            <person name="Shue B.C."/>
            <person name="Zheng X.H."/>
            <person name="Zhong F."/>
            <person name="Delcher A.L."/>
            <person name="Huson D.H."/>
            <person name="Kravitz S.A."/>
            <person name="Mouchard L."/>
            <person name="Reinert K."/>
            <person name="Remington K.A."/>
            <person name="Clark A.G."/>
            <person name="Waterman M.S."/>
            <person name="Eichler E.E."/>
            <person name="Adams M.D."/>
            <person name="Hunkapiller M.W."/>
            <person name="Myers E.W."/>
            <person name="Venter J.C."/>
        </authorList>
    </citation>
    <scope>NUCLEOTIDE SEQUENCE [LARGE SCALE GENOMIC DNA]</scope>
</reference>
<reference key="4">
    <citation type="journal article" date="2004" name="Genome Res.">
        <title>The status, quality, and expansion of the NIH full-length cDNA project: the Mammalian Gene Collection (MGC).</title>
        <authorList>
            <consortium name="The MGC Project Team"/>
        </authorList>
    </citation>
    <scope>NUCLEOTIDE SEQUENCE [LARGE SCALE MRNA] (ISOFORM 2)</scope>
</reference>
<reference key="5">
    <citation type="journal article" date="2004" name="Genome Biol.">
        <title>An unappreciated role for RNA surveillance.</title>
        <authorList>
            <person name="Hillman R.T."/>
            <person name="Green R.E."/>
            <person name="Brenner S.E."/>
        </authorList>
    </citation>
    <scope>SPLICE ISOFORM(S) THAT ARE POTENTIAL NMD TARGET(S)</scope>
</reference>
<reference key="6">
    <citation type="journal article" date="2016" name="J. Biol. Chem.">
        <title>PR Domain-containing Protein 7 (PRDM7) Is a Histone 3 Lysine 4 Trimethyltransferase.</title>
        <authorList>
            <person name="Blazer L.L."/>
            <person name="Lima-Fernandes E."/>
            <person name="Gibson E."/>
            <person name="Eram M.S."/>
            <person name="Loppnau P."/>
            <person name="Arrowsmith C.H."/>
            <person name="Schapira M."/>
            <person name="Vedadi M."/>
        </authorList>
    </citation>
    <scope>FUNCTION</scope>
    <scope>CATALYTIC ACTIVITY</scope>
    <scope>BIOPHYSICOCHEMICAL PROPERTIES</scope>
    <scope>MUTAGENESIS OF SER-289; SER-312 AND SER-357</scope>
</reference>
<feature type="chain" id="PRO_0000047763" description="Histone-lysine N-methyltransferase PRDM7">
    <location>
        <begin position="1"/>
        <end position="492"/>
    </location>
</feature>
<feature type="domain" description="KRAB-related" evidence="1">
    <location>
        <begin position="23"/>
        <end position="86"/>
    </location>
</feature>
<feature type="domain" description="SET" evidence="2">
    <location>
        <begin position="244"/>
        <end position="358"/>
    </location>
</feature>
<feature type="region of interest" description="Disordered" evidence="3">
    <location>
        <begin position="1"/>
        <end position="22"/>
    </location>
</feature>
<feature type="region of interest" description="Disordered" evidence="3">
    <location>
        <begin position="111"/>
        <end position="179"/>
    </location>
</feature>
<feature type="compositionally biased region" description="Polar residues" evidence="3">
    <location>
        <begin position="135"/>
        <end position="150"/>
    </location>
</feature>
<feature type="compositionally biased region" description="Basic and acidic residues" evidence="3">
    <location>
        <begin position="167"/>
        <end position="179"/>
    </location>
</feature>
<feature type="splice variant" id="VSP_036349" description="In isoform 2 and isoform 3." evidence="6 7">
    <location>
        <begin position="1"/>
        <end position="206"/>
    </location>
</feature>
<feature type="splice variant" id="VSP_006930" description="In isoform 2." evidence="6 7">
    <original>YVNCARDDEEQNLVAFQYHRQIFYRTCRVIRPGCELLVWSGDEYGQELGIRSSIEPAESL</original>
    <variation>TKARDPSMSLMLSGLFKSKISQSTCGTQSLLSELPRTICKKTSPTRESLPRGSESGAAIF</variation>
    <location>
        <begin position="318"/>
        <end position="377"/>
    </location>
</feature>
<feature type="splice variant" id="VSP_036350" description="In isoform 3." evidence="6">
    <original>RSSIEPAESLGQAVNCWSGMGMSMARNWASSGAASGRKSSWQGENQSQRSIHVPHAVWPFQVKNFSVNMWNAITPLRTSQDHLQENFSNQRIPAQGIRIRSGNILIHAAVMTKPKVKRSKKGPNS</original>
    <variation>KWGSKWKKELMAGREPKPEIHPCPSCCLAFSSQKFLSQHVERNHSSQNFPGPSARKLLQPENPCPGDQNQERQYSDPRCCNDKTKGQEIKERSKLLNKRTWQREISRAFSSPPKGQMGSSRVGERMMEEESRTGQKVNPGNTGKLFVGVGISRIAKVKYGECGQGFSDKSDVITHQRTHTGGKPYVCRECGEGFSRKSDLLSHQRTHTGEKPYVCRECERGFSRKSVLLIHQRTHRGEAPVCRKDE</variation>
    <location>
        <begin position="368"/>
        <end position="492"/>
    </location>
</feature>
<feature type="splice variant" id="VSP_006931" description="In isoform 2." evidence="6 7">
    <location>
        <begin position="378"/>
        <end position="492"/>
    </location>
</feature>
<feature type="sequence variant" id="VAR_057461" description="In dbSNP:rs12925933." evidence="4">
    <original>D</original>
    <variation>E</variation>
    <location>
        <position position="90"/>
    </location>
</feature>
<feature type="sequence variant" id="VAR_057462" description="In dbSNP:rs2078478.">
    <original>R</original>
    <variation>K</variation>
    <location>
        <position position="131"/>
    </location>
</feature>
<feature type="sequence variant" id="VAR_057463" description="In dbSNP:rs7206111.">
    <original>N</original>
    <variation>K</variation>
    <location>
        <position position="435"/>
    </location>
</feature>
<feature type="mutagenesis site" description="Gains the ability to sequentially mono-, di-, and tri-methylate both 'Lys-4' and 'Lys-36' of histone H3, albeit with lower efficiency when compared to PRDM9." evidence="5">
    <original>S</original>
    <variation>N</variation>
    <location>
        <position position="289"/>
    </location>
</feature>
<feature type="mutagenesis site" description="Gains the ability to sequentially mono-, di-, and tri-methylate both 'Lys-4' and 'Lys-36' of histone H3, albeit with lower efficiency when compared to PRDM9." evidence="5">
    <original>S</original>
    <variation>W</variation>
    <location>
        <position position="312"/>
    </location>
</feature>
<feature type="mutagenesis site" description="Substantially increases histone-lysine N-methyltransferase activity. Gains the catalytic competency of PRDM9. Sequentially mono-, di-, and tri-methylates both 'Lys-4' and 'Lys-36' of histone H3." evidence="5">
    <original>S</original>
    <variation>Y</variation>
    <location>
        <position position="357"/>
    </location>
</feature>
<feature type="sequence conflict" description="In Ref. 2; AAF78084." evidence="9" ref="2">
    <original>S</original>
    <variation>Y</variation>
    <location>
        <position position="357"/>
    </location>
</feature>
<comment type="function">
    <text evidence="5">Histone methyltransferase that selectively methylates 'Lys-4' of dimethylated histone H3 (H3K4me2) to produce trimethylated 'Lys-4' histone H3 (H3K4me3). May play a role in epigenetic regulation of gene expression by defining an active chromatin state.</text>
</comment>
<comment type="catalytic activity">
    <reaction evidence="5">
        <text>N(6),N(6)-dimethyl-L-lysyl(4)-[histone H3] + S-adenosyl-L-methionine = N(6),N(6),N(6)-trimethyl-L-lysyl(4)-[histone H3] + S-adenosyl-L-homocysteine + H(+)</text>
        <dbReference type="Rhea" id="RHEA:60272"/>
        <dbReference type="Rhea" id="RHEA-COMP:15537"/>
        <dbReference type="Rhea" id="RHEA-COMP:15540"/>
        <dbReference type="ChEBI" id="CHEBI:15378"/>
        <dbReference type="ChEBI" id="CHEBI:57856"/>
        <dbReference type="ChEBI" id="CHEBI:59789"/>
        <dbReference type="ChEBI" id="CHEBI:61961"/>
        <dbReference type="ChEBI" id="CHEBI:61976"/>
    </reaction>
    <physiologicalReaction direction="left-to-right" evidence="5">
        <dbReference type="Rhea" id="RHEA:60273"/>
    </physiologicalReaction>
</comment>
<comment type="biophysicochemical properties">
    <kinetics>
        <KM evidence="5">900 uM for S-adenosyl-L-methionine</KM>
        <KM evidence="5">0.8 uM for H3K4me0</KM>
        <KM evidence="5">0.7 uM for H3K4me1</KM>
        <KM evidence="5">3.5 uM for H3K4me2</KM>
        <text evidence="5">kcat is 190 h(-1) with S-adenosyl-L-methionine as substrate. kcat is 9 h(-1) with H3K4me0 as substrate. kcat is 8 h(-1) with H3K4me1 as substrate. kcat is 190 h(-1) with H3K4me2 as substrate.</text>
    </kinetics>
</comment>
<comment type="interaction">
    <interactant intactId="EBI-10312471">
        <id>Q9NQW5</id>
    </interactant>
    <interactant intactId="EBI-359224">
        <id>Q13077</id>
        <label>TRAF1</label>
    </interactant>
    <organismsDiffer>false</organismsDiffer>
    <experiments>3</experiments>
</comment>
<comment type="subcellular location">
    <subcellularLocation>
        <location evidence="9">Nucleus</location>
    </subcellularLocation>
    <subcellularLocation>
        <location evidence="9">Chromosome</location>
    </subcellularLocation>
</comment>
<comment type="alternative products">
    <event type="alternative splicing"/>
    <isoform>
        <id>Q9NQW5-3</id>
        <name>1</name>
        <sequence type="displayed"/>
    </isoform>
    <isoform>
        <id>Q9NQW5-2</id>
        <name>2</name>
        <name>B</name>
        <sequence type="described" ref="VSP_036349 VSP_006930 VSP_006931"/>
    </isoform>
    <isoform>
        <id>Q9NQW5-1</id>
        <name>3</name>
        <name>A</name>
        <sequence type="described" ref="VSP_036349 VSP_036350"/>
    </isoform>
</comment>
<comment type="miscellaneous">
    <molecule>Isoform 3</molecule>
    <text evidence="9">May be produced at very low levels due to a premature stop codon in the mRNA, leading to nonsense-mediated mRNA decay.</text>
</comment>
<proteinExistence type="evidence at protein level"/>